<feature type="initiator methionine" description="Removed" evidence="3">
    <location>
        <position position="1"/>
    </location>
</feature>
<feature type="chain" id="PRO_0000285208" description="RING finger protein 11">
    <location>
        <begin position="2"/>
        <end position="154"/>
    </location>
</feature>
<feature type="zinc finger region" description="RING-type" evidence="4">
    <location>
        <begin position="99"/>
        <end position="140"/>
    </location>
</feature>
<feature type="region of interest" description="Disordered" evidence="5">
    <location>
        <begin position="1"/>
        <end position="53"/>
    </location>
</feature>
<feature type="short sequence motif" description="PPxY motif" evidence="1">
    <location>
        <begin position="37"/>
        <end position="40"/>
    </location>
</feature>
<feature type="compositionally biased region" description="Polar residues" evidence="5">
    <location>
        <begin position="1"/>
        <end position="12"/>
    </location>
</feature>
<feature type="compositionally biased region" description="Low complexity" evidence="5">
    <location>
        <begin position="41"/>
        <end position="51"/>
    </location>
</feature>
<feature type="modified residue" description="Phosphoserine" evidence="3">
    <location>
        <position position="14"/>
    </location>
</feature>
<feature type="modified residue" description="Phosphoserine" evidence="2">
    <location>
        <position position="25"/>
    </location>
</feature>
<feature type="modified residue" description="Phosphothreonine; by PKB/AKT1" evidence="3">
    <location>
        <position position="135"/>
    </location>
</feature>
<feature type="lipid moiety-binding region" description="N-myristoyl glycine" evidence="1">
    <location>
        <position position="2"/>
    </location>
</feature>
<feature type="lipid moiety-binding region" description="S-palmitoyl cysteine" evidence="1">
    <location>
        <position position="4"/>
    </location>
</feature>
<gene>
    <name type="primary">RNF11</name>
</gene>
<proteinExistence type="evidence at transcript level"/>
<sequence>MGNCLKSPTSDDISLLHESQSDRASFGEGTEPDQEPPPPYQEQVPVPVYHPTPSQTRLATQLTEEEQIRIAQRIGLIQHLPKGVYDPGRDGSEKKIRECVICMMDFVYGDPIRFLPCMHIYHLDCIDDWLMRSFTCPSCMEPVDAALLSSYETN</sequence>
<accession>Q08DI6</accession>
<comment type="function">
    <text evidence="1">Essential component of a ubiquitin-editing protein complex, comprising also TNFAIP3, ITCH and TAX1BP1, that ensures the transient nature of inflammatory signaling pathways. Promotes the association of TNFAIP3 to RIPK1 after TNF stimulation. TNFAIP3 deubiquitinates 'Lys-63' polyubiquitin chains on RIPK1 and catalyzes the formation of 'Lys-48'-polyubiquitin chains. This leads to RIPK1 proteasomal degradation and consequently termination of the TNF- or LPS-mediated activation of NF-kappa-B. Recruits STAMBP to the E3 ubiquitin-ligase SMURF2 for ubiquitination, leading to its degradation by the 26S proteasome (By similarity).</text>
</comment>
<comment type="subunit">
    <text evidence="1">Interacts (when phosphorylated) with 14-3-3. Interacts with the E3 ubiquitin-ligases NEDD4, ITCH, SMURF2 and WWP1 (By similarity). Also interacts with the E2 ubiquitin-conjugating enzymes UBE2D1 and UBE2N, but neither with CDC34, nor with UBE2L3. Interacts with ZNF350, EPS15 and STAMBP (By similarity). After TNF stimulation, interacts with TAX1BP1, TNFAIP3 and RIPK1; these interactions are transient and they are lost after 1 hour of stimulation with TNF (By similarity). Interacts with GGA1 (By similarity).</text>
</comment>
<comment type="subcellular location">
    <subcellularLocation>
        <location evidence="1">Early endosome</location>
    </subcellularLocation>
    <subcellularLocation>
        <location evidence="1">Recycling endosome</location>
    </subcellularLocation>
    <subcellularLocation>
        <location evidence="1">Cytoplasm</location>
    </subcellularLocation>
    <subcellularLocation>
        <location evidence="1">Nucleus</location>
    </subcellularLocation>
    <text evidence="1">Predominantly cytoplasmic, when unphosphorylated, and nuclear, when phosphorylated by PKB/AKT1.</text>
</comment>
<comment type="domain">
    <text evidence="1">The PPxY motif mediates interaction with NEDD4.</text>
</comment>
<comment type="PTM">
    <text evidence="1">Ubiquitinated in the presence of ITCH, SMURF2 and UBE2D1, as well as WWP1.</text>
</comment>
<comment type="PTM">
    <text evidence="1">Phosphorylation by PKB/AKT1 may accelerate degradation by the proteasome.</text>
</comment>
<comment type="PTM">
    <text evidence="1">Acylation at both Gly-2 and Cys-4 is required for proper localization to the endosomes.</text>
</comment>
<dbReference type="EMBL" id="BC123728">
    <property type="protein sequence ID" value="AAI23729.1"/>
    <property type="molecule type" value="mRNA"/>
</dbReference>
<dbReference type="RefSeq" id="NP_001071421.1">
    <property type="nucleotide sequence ID" value="NM_001077953.1"/>
</dbReference>
<dbReference type="SMR" id="Q08DI6"/>
<dbReference type="FunCoup" id="Q08DI6">
    <property type="interactions" value="1957"/>
</dbReference>
<dbReference type="IntAct" id="Q08DI6">
    <property type="interactions" value="3"/>
</dbReference>
<dbReference type="STRING" id="9913.ENSBTAP00000059090"/>
<dbReference type="PaxDb" id="9913-ENSBTAP00000017277"/>
<dbReference type="Ensembl" id="ENSBTAT00000086641.1">
    <property type="protein sequence ID" value="ENSBTAP00000059090.1"/>
    <property type="gene ID" value="ENSBTAG00000054545.1"/>
</dbReference>
<dbReference type="GeneID" id="522791"/>
<dbReference type="KEGG" id="bta:522791"/>
<dbReference type="CTD" id="26994"/>
<dbReference type="VEuPathDB" id="HostDB:ENSBTAG00000054545"/>
<dbReference type="VGNC" id="VGNC:34009">
    <property type="gene designation" value="RNF11"/>
</dbReference>
<dbReference type="eggNOG" id="KOG0800">
    <property type="taxonomic scope" value="Eukaryota"/>
</dbReference>
<dbReference type="GeneTree" id="ENSGT00730000110988"/>
<dbReference type="HOGENOM" id="CLU_123539_1_1_1"/>
<dbReference type="InParanoid" id="Q08DI6"/>
<dbReference type="OMA" id="HLDCIDN"/>
<dbReference type="OrthoDB" id="9984778at2759"/>
<dbReference type="Proteomes" id="UP000009136">
    <property type="component" value="Chromosome 3"/>
</dbReference>
<dbReference type="Bgee" id="ENSBTAG00000054545">
    <property type="expression patterns" value="Expressed in occipital lobe and 102 other cell types or tissues"/>
</dbReference>
<dbReference type="GO" id="GO:0005769">
    <property type="term" value="C:early endosome"/>
    <property type="evidence" value="ECO:0007669"/>
    <property type="project" value="UniProtKB-SubCell"/>
</dbReference>
<dbReference type="GO" id="GO:0005634">
    <property type="term" value="C:nucleus"/>
    <property type="evidence" value="ECO:0007669"/>
    <property type="project" value="UniProtKB-SubCell"/>
</dbReference>
<dbReference type="GO" id="GO:0055037">
    <property type="term" value="C:recycling endosome"/>
    <property type="evidence" value="ECO:0007669"/>
    <property type="project" value="UniProtKB-SubCell"/>
</dbReference>
<dbReference type="GO" id="GO:0000151">
    <property type="term" value="C:ubiquitin ligase complex"/>
    <property type="evidence" value="ECO:0000318"/>
    <property type="project" value="GO_Central"/>
</dbReference>
<dbReference type="GO" id="GO:0061630">
    <property type="term" value="F:ubiquitin protein ligase activity"/>
    <property type="evidence" value="ECO:0000318"/>
    <property type="project" value="GO_Central"/>
</dbReference>
<dbReference type="GO" id="GO:0008270">
    <property type="term" value="F:zinc ion binding"/>
    <property type="evidence" value="ECO:0007669"/>
    <property type="project" value="UniProtKB-KW"/>
</dbReference>
<dbReference type="GO" id="GO:0051865">
    <property type="term" value="P:protein autoubiquitination"/>
    <property type="evidence" value="ECO:0007669"/>
    <property type="project" value="Ensembl"/>
</dbReference>
<dbReference type="GO" id="GO:0006511">
    <property type="term" value="P:ubiquitin-dependent protein catabolic process"/>
    <property type="evidence" value="ECO:0000318"/>
    <property type="project" value="GO_Central"/>
</dbReference>
<dbReference type="CDD" id="cd16468">
    <property type="entry name" value="RING-H2_RNF11"/>
    <property type="match status" value="1"/>
</dbReference>
<dbReference type="FunFam" id="3.30.40.10:FF:000134">
    <property type="entry name" value="Ring finger protein 11"/>
    <property type="match status" value="1"/>
</dbReference>
<dbReference type="Gene3D" id="3.30.40.10">
    <property type="entry name" value="Zinc/RING finger domain, C3HC4 (zinc finger)"/>
    <property type="match status" value="1"/>
</dbReference>
<dbReference type="InterPro" id="IPR042981">
    <property type="entry name" value="RNF11_RING-H2"/>
</dbReference>
<dbReference type="InterPro" id="IPR052804">
    <property type="entry name" value="UEC_component"/>
</dbReference>
<dbReference type="InterPro" id="IPR001841">
    <property type="entry name" value="Znf_RING"/>
</dbReference>
<dbReference type="InterPro" id="IPR013083">
    <property type="entry name" value="Znf_RING/FYVE/PHD"/>
</dbReference>
<dbReference type="PANTHER" id="PTHR46359">
    <property type="entry name" value="GEO07743P1"/>
    <property type="match status" value="1"/>
</dbReference>
<dbReference type="PANTHER" id="PTHR46359:SF1">
    <property type="entry name" value="RING FINGER PROTEIN 11"/>
    <property type="match status" value="1"/>
</dbReference>
<dbReference type="Pfam" id="PF13639">
    <property type="entry name" value="zf-RING_2"/>
    <property type="match status" value="1"/>
</dbReference>
<dbReference type="SMART" id="SM00184">
    <property type="entry name" value="RING"/>
    <property type="match status" value="1"/>
</dbReference>
<dbReference type="SUPFAM" id="SSF57850">
    <property type="entry name" value="RING/U-box"/>
    <property type="match status" value="1"/>
</dbReference>
<dbReference type="PROSITE" id="PS50089">
    <property type="entry name" value="ZF_RING_2"/>
    <property type="match status" value="1"/>
</dbReference>
<name>RNF11_BOVIN</name>
<reference key="1">
    <citation type="submission" date="2006-09" db="EMBL/GenBank/DDBJ databases">
        <authorList>
            <consortium name="NIH - Mammalian Gene Collection (MGC) project"/>
        </authorList>
    </citation>
    <scope>NUCLEOTIDE SEQUENCE [LARGE SCALE MRNA]</scope>
    <source>
        <strain>Hereford</strain>
        <tissue>Fetal muscle</tissue>
    </source>
</reference>
<organism>
    <name type="scientific">Bos taurus</name>
    <name type="common">Bovine</name>
    <dbReference type="NCBI Taxonomy" id="9913"/>
    <lineage>
        <taxon>Eukaryota</taxon>
        <taxon>Metazoa</taxon>
        <taxon>Chordata</taxon>
        <taxon>Craniata</taxon>
        <taxon>Vertebrata</taxon>
        <taxon>Euteleostomi</taxon>
        <taxon>Mammalia</taxon>
        <taxon>Eutheria</taxon>
        <taxon>Laurasiatheria</taxon>
        <taxon>Artiodactyla</taxon>
        <taxon>Ruminantia</taxon>
        <taxon>Pecora</taxon>
        <taxon>Bovidae</taxon>
        <taxon>Bovinae</taxon>
        <taxon>Bos</taxon>
    </lineage>
</organism>
<keyword id="KW-0963">Cytoplasm</keyword>
<keyword id="KW-0967">Endosome</keyword>
<keyword id="KW-0449">Lipoprotein</keyword>
<keyword id="KW-0479">Metal-binding</keyword>
<keyword id="KW-0519">Myristate</keyword>
<keyword id="KW-0539">Nucleus</keyword>
<keyword id="KW-0564">Palmitate</keyword>
<keyword id="KW-0597">Phosphoprotein</keyword>
<keyword id="KW-1185">Reference proteome</keyword>
<keyword id="KW-0832">Ubl conjugation</keyword>
<keyword id="KW-0833">Ubl conjugation pathway</keyword>
<keyword id="KW-0862">Zinc</keyword>
<keyword id="KW-0863">Zinc-finger</keyword>
<protein>
    <recommendedName>
        <fullName>RING finger protein 11</fullName>
    </recommendedName>
</protein>
<evidence type="ECO:0000250" key="1"/>
<evidence type="ECO:0000250" key="2">
    <source>
        <dbReference type="UniProtKB" id="Q9QYK7"/>
    </source>
</evidence>
<evidence type="ECO:0000250" key="3">
    <source>
        <dbReference type="UniProtKB" id="Q9Y3C5"/>
    </source>
</evidence>
<evidence type="ECO:0000255" key="4">
    <source>
        <dbReference type="PROSITE-ProRule" id="PRU00175"/>
    </source>
</evidence>
<evidence type="ECO:0000256" key="5">
    <source>
        <dbReference type="SAM" id="MobiDB-lite"/>
    </source>
</evidence>